<organism>
    <name type="scientific">Escherichia coli O81 (strain ED1a)</name>
    <dbReference type="NCBI Taxonomy" id="585397"/>
    <lineage>
        <taxon>Bacteria</taxon>
        <taxon>Pseudomonadati</taxon>
        <taxon>Pseudomonadota</taxon>
        <taxon>Gammaproteobacteria</taxon>
        <taxon>Enterobacterales</taxon>
        <taxon>Enterobacteriaceae</taxon>
        <taxon>Escherichia</taxon>
    </lineage>
</organism>
<accession>B7MNM8</accession>
<name>RS20_ECO81</name>
<protein>
    <recommendedName>
        <fullName evidence="1">Small ribosomal subunit protein bS20</fullName>
    </recommendedName>
    <alternativeName>
        <fullName evidence="3">30S ribosomal protein S20</fullName>
    </alternativeName>
</protein>
<dbReference type="EMBL" id="CU928162">
    <property type="protein sequence ID" value="CAR06243.1"/>
    <property type="molecule type" value="Genomic_DNA"/>
</dbReference>
<dbReference type="RefSeq" id="WP_001274021.1">
    <property type="nucleotide sequence ID" value="NC_011745.1"/>
</dbReference>
<dbReference type="SMR" id="B7MNM8"/>
<dbReference type="GeneID" id="93777413"/>
<dbReference type="KEGG" id="ecq:ECED1_0020"/>
<dbReference type="HOGENOM" id="CLU_160655_4_0_6"/>
<dbReference type="Proteomes" id="UP000000748">
    <property type="component" value="Chromosome"/>
</dbReference>
<dbReference type="GO" id="GO:0005829">
    <property type="term" value="C:cytosol"/>
    <property type="evidence" value="ECO:0007669"/>
    <property type="project" value="TreeGrafter"/>
</dbReference>
<dbReference type="GO" id="GO:0015935">
    <property type="term" value="C:small ribosomal subunit"/>
    <property type="evidence" value="ECO:0007669"/>
    <property type="project" value="TreeGrafter"/>
</dbReference>
<dbReference type="GO" id="GO:0070181">
    <property type="term" value="F:small ribosomal subunit rRNA binding"/>
    <property type="evidence" value="ECO:0007669"/>
    <property type="project" value="TreeGrafter"/>
</dbReference>
<dbReference type="GO" id="GO:0003735">
    <property type="term" value="F:structural constituent of ribosome"/>
    <property type="evidence" value="ECO:0007669"/>
    <property type="project" value="InterPro"/>
</dbReference>
<dbReference type="GO" id="GO:0006412">
    <property type="term" value="P:translation"/>
    <property type="evidence" value="ECO:0007669"/>
    <property type="project" value="UniProtKB-UniRule"/>
</dbReference>
<dbReference type="FunFam" id="1.20.58.110:FF:000001">
    <property type="entry name" value="30S ribosomal protein S20"/>
    <property type="match status" value="1"/>
</dbReference>
<dbReference type="Gene3D" id="1.20.58.110">
    <property type="entry name" value="Ribosomal protein S20"/>
    <property type="match status" value="1"/>
</dbReference>
<dbReference type="HAMAP" id="MF_00500">
    <property type="entry name" value="Ribosomal_bS20"/>
    <property type="match status" value="1"/>
</dbReference>
<dbReference type="InterPro" id="IPR002583">
    <property type="entry name" value="Ribosomal_bS20"/>
</dbReference>
<dbReference type="InterPro" id="IPR036510">
    <property type="entry name" value="Ribosomal_bS20_sf"/>
</dbReference>
<dbReference type="NCBIfam" id="TIGR00029">
    <property type="entry name" value="S20"/>
    <property type="match status" value="1"/>
</dbReference>
<dbReference type="PANTHER" id="PTHR33398">
    <property type="entry name" value="30S RIBOSOMAL PROTEIN S20"/>
    <property type="match status" value="1"/>
</dbReference>
<dbReference type="PANTHER" id="PTHR33398:SF1">
    <property type="entry name" value="SMALL RIBOSOMAL SUBUNIT PROTEIN BS20C"/>
    <property type="match status" value="1"/>
</dbReference>
<dbReference type="Pfam" id="PF01649">
    <property type="entry name" value="Ribosomal_S20p"/>
    <property type="match status" value="1"/>
</dbReference>
<dbReference type="SUPFAM" id="SSF46992">
    <property type="entry name" value="Ribosomal protein S20"/>
    <property type="match status" value="1"/>
</dbReference>
<gene>
    <name evidence="1" type="primary">rpsT</name>
    <name type="ordered locus">ECED1_0020</name>
</gene>
<keyword id="KW-0687">Ribonucleoprotein</keyword>
<keyword id="KW-0689">Ribosomal protein</keyword>
<keyword id="KW-0694">RNA-binding</keyword>
<keyword id="KW-0699">rRNA-binding</keyword>
<evidence type="ECO:0000255" key="1">
    <source>
        <dbReference type="HAMAP-Rule" id="MF_00500"/>
    </source>
</evidence>
<evidence type="ECO:0000256" key="2">
    <source>
        <dbReference type="SAM" id="MobiDB-lite"/>
    </source>
</evidence>
<evidence type="ECO:0000305" key="3"/>
<comment type="function">
    <text evidence="1">Binds directly to 16S ribosomal RNA.</text>
</comment>
<comment type="similarity">
    <text evidence="1">Belongs to the bacterial ribosomal protein bS20 family.</text>
</comment>
<proteinExistence type="inferred from homology"/>
<reference key="1">
    <citation type="journal article" date="2009" name="PLoS Genet.">
        <title>Organised genome dynamics in the Escherichia coli species results in highly diverse adaptive paths.</title>
        <authorList>
            <person name="Touchon M."/>
            <person name="Hoede C."/>
            <person name="Tenaillon O."/>
            <person name="Barbe V."/>
            <person name="Baeriswyl S."/>
            <person name="Bidet P."/>
            <person name="Bingen E."/>
            <person name="Bonacorsi S."/>
            <person name="Bouchier C."/>
            <person name="Bouvet O."/>
            <person name="Calteau A."/>
            <person name="Chiapello H."/>
            <person name="Clermont O."/>
            <person name="Cruveiller S."/>
            <person name="Danchin A."/>
            <person name="Diard M."/>
            <person name="Dossat C."/>
            <person name="Karoui M.E."/>
            <person name="Frapy E."/>
            <person name="Garry L."/>
            <person name="Ghigo J.M."/>
            <person name="Gilles A.M."/>
            <person name="Johnson J."/>
            <person name="Le Bouguenec C."/>
            <person name="Lescat M."/>
            <person name="Mangenot S."/>
            <person name="Martinez-Jehanne V."/>
            <person name="Matic I."/>
            <person name="Nassif X."/>
            <person name="Oztas S."/>
            <person name="Petit M.A."/>
            <person name="Pichon C."/>
            <person name="Rouy Z."/>
            <person name="Ruf C.S."/>
            <person name="Schneider D."/>
            <person name="Tourret J."/>
            <person name="Vacherie B."/>
            <person name="Vallenet D."/>
            <person name="Medigue C."/>
            <person name="Rocha E.P.C."/>
            <person name="Denamur E."/>
        </authorList>
    </citation>
    <scope>NUCLEOTIDE SEQUENCE [LARGE SCALE GENOMIC DNA]</scope>
    <source>
        <strain>ED1a</strain>
    </source>
</reference>
<sequence>MANIKSAKKRAIQSEKARKHNASRRSMMRTFIKKVYAAIEAGDKAAAQKAFNEMQPIVDRQAAKGLIHKNKAARHKANLTAQINKLA</sequence>
<feature type="chain" id="PRO_1000194245" description="Small ribosomal subunit protein bS20">
    <location>
        <begin position="1"/>
        <end position="87"/>
    </location>
</feature>
<feature type="region of interest" description="Disordered" evidence="2">
    <location>
        <begin position="1"/>
        <end position="26"/>
    </location>
</feature>